<protein>
    <recommendedName>
        <fullName>Universal stress protein Rv2624c</fullName>
        <shortName>USP Rv2624c</shortName>
    </recommendedName>
</protein>
<proteinExistence type="evidence at protein level"/>
<name>Y2624_MYCTU</name>
<organism>
    <name type="scientific">Mycobacterium tuberculosis (strain ATCC 25618 / H37Rv)</name>
    <dbReference type="NCBI Taxonomy" id="83332"/>
    <lineage>
        <taxon>Bacteria</taxon>
        <taxon>Bacillati</taxon>
        <taxon>Actinomycetota</taxon>
        <taxon>Actinomycetes</taxon>
        <taxon>Mycobacteriales</taxon>
        <taxon>Mycobacteriaceae</taxon>
        <taxon>Mycobacterium</taxon>
        <taxon>Mycobacterium tuberculosis complex</taxon>
    </lineage>
</organism>
<comment type="induction">
    <text evidence="2 3 4 5">A member of the dormancy regulon. Induced in response to reduced oxygen tension (hypoxia), low levels of nitric oxide (NO) and carbon monoxide (CO). It is hoped that this regulon will give insight into the latent, or dormant phase of infection.</text>
</comment>
<comment type="similarity">
    <text evidence="7">Belongs to the universal stress protein A family.</text>
</comment>
<accession>P9WFD5</accession>
<accession>L0TD36</accession>
<accession>O06188</accession>
<accession>Q7D6V6</accession>
<feature type="chain" id="PRO_0000392629" description="Universal stress protein Rv2624c">
    <location>
        <begin position="1"/>
        <end position="272"/>
    </location>
</feature>
<feature type="binding site" evidence="1">
    <location>
        <position position="15"/>
    </location>
    <ligand>
        <name>ATP</name>
        <dbReference type="ChEBI" id="CHEBI:30616"/>
    </ligand>
</feature>
<feature type="binding site" evidence="1">
    <location>
        <begin position="109"/>
        <end position="115"/>
    </location>
    <ligand>
        <name>ATP</name>
        <dbReference type="ChEBI" id="CHEBI:30616"/>
    </ligand>
</feature>
<feature type="binding site" evidence="1">
    <location>
        <begin position="123"/>
        <end position="124"/>
    </location>
    <ligand>
        <name>ATP</name>
        <dbReference type="ChEBI" id="CHEBI:30616"/>
    </ligand>
</feature>
<feature type="cross-link" description="Isoglutamyl lysine isopeptide (Lys-Gln) (interchain with Q-Cter in protein Pup)" evidence="6">
    <location>
        <position position="82"/>
    </location>
</feature>
<gene>
    <name type="ordered locus">Rv2624c</name>
</gene>
<dbReference type="EMBL" id="AL123456">
    <property type="protein sequence ID" value="CCP45422.1"/>
    <property type="molecule type" value="Genomic_DNA"/>
</dbReference>
<dbReference type="PIR" id="G70572">
    <property type="entry name" value="G70572"/>
</dbReference>
<dbReference type="RefSeq" id="NP_217140.1">
    <property type="nucleotide sequence ID" value="NC_000962.3"/>
</dbReference>
<dbReference type="RefSeq" id="WP_003413594.1">
    <property type="nucleotide sequence ID" value="NC_000962.3"/>
</dbReference>
<dbReference type="SMR" id="P9WFD5"/>
<dbReference type="FunCoup" id="P9WFD5">
    <property type="interactions" value="2"/>
</dbReference>
<dbReference type="STRING" id="83332.Rv2624c"/>
<dbReference type="PaxDb" id="83332-Rv2624c"/>
<dbReference type="DNASU" id="888939"/>
<dbReference type="GeneID" id="888939"/>
<dbReference type="KEGG" id="mtu:Rv2624c"/>
<dbReference type="KEGG" id="mtv:RVBD_2624c"/>
<dbReference type="PATRIC" id="fig|83332.111.peg.2928"/>
<dbReference type="TubercuList" id="Rv2624c"/>
<dbReference type="eggNOG" id="COG0589">
    <property type="taxonomic scope" value="Bacteria"/>
</dbReference>
<dbReference type="InParanoid" id="P9WFD5"/>
<dbReference type="OrthoDB" id="4614783at2"/>
<dbReference type="PhylomeDB" id="P9WFD5"/>
<dbReference type="Proteomes" id="UP000001584">
    <property type="component" value="Chromosome"/>
</dbReference>
<dbReference type="GO" id="GO:0005886">
    <property type="term" value="C:plasma membrane"/>
    <property type="evidence" value="ECO:0007005"/>
    <property type="project" value="MTBBASE"/>
</dbReference>
<dbReference type="GO" id="GO:0005524">
    <property type="term" value="F:ATP binding"/>
    <property type="evidence" value="ECO:0007669"/>
    <property type="project" value="UniProtKB-KW"/>
</dbReference>
<dbReference type="GO" id="GO:0006950">
    <property type="term" value="P:response to stress"/>
    <property type="evidence" value="ECO:0000318"/>
    <property type="project" value="GO_Central"/>
</dbReference>
<dbReference type="CDD" id="cd23944">
    <property type="entry name" value="USP_Rv2623_repeat1"/>
    <property type="match status" value="1"/>
</dbReference>
<dbReference type="FunFam" id="3.40.50.620:FF:000123">
    <property type="entry name" value="Universal stress protein family"/>
    <property type="match status" value="1"/>
</dbReference>
<dbReference type="Gene3D" id="3.40.50.620">
    <property type="entry name" value="HUPs"/>
    <property type="match status" value="2"/>
</dbReference>
<dbReference type="InterPro" id="IPR014729">
    <property type="entry name" value="Rossmann-like_a/b/a_fold"/>
</dbReference>
<dbReference type="InterPro" id="IPR006015">
    <property type="entry name" value="Universal_stress_UspA"/>
</dbReference>
<dbReference type="InterPro" id="IPR006016">
    <property type="entry name" value="UspA"/>
</dbReference>
<dbReference type="PANTHER" id="PTHR46268">
    <property type="entry name" value="STRESS RESPONSE PROTEIN NHAX"/>
    <property type="match status" value="1"/>
</dbReference>
<dbReference type="PANTHER" id="PTHR46268:SF6">
    <property type="entry name" value="UNIVERSAL STRESS PROTEIN UP12"/>
    <property type="match status" value="1"/>
</dbReference>
<dbReference type="Pfam" id="PF00582">
    <property type="entry name" value="Usp"/>
    <property type="match status" value="1"/>
</dbReference>
<dbReference type="PRINTS" id="PR01438">
    <property type="entry name" value="UNVRSLSTRESS"/>
</dbReference>
<dbReference type="SUPFAM" id="SSF52402">
    <property type="entry name" value="Adenine nucleotide alpha hydrolases-like"/>
    <property type="match status" value="2"/>
</dbReference>
<sequence length="272" mass="29400">MSGRGEPTMKTIIVGIDGSHAAITAALWGVDEAISRAVPLRLVSVIKPTHPSPDDYDRDLAHAERSLREAQSAVEAAGKLVKIETDIPRGPAGPVLVEASRDAEMICVGSVGIGRYASSILGSTATELAEKAHCPVAVMRSKVDQPASDINWIVVRMTDAPDNEAVLEYAAREAKLRQAPILALGGRPEELREIPDGEFERRVQDWHHRHPDVRVYPITTHTGIARFLADHDERVQLAVIGGGEAGQLARLVGPSGHPVFRHAECSVLVVRR</sequence>
<reference key="1">
    <citation type="journal article" date="1998" name="Nature">
        <title>Deciphering the biology of Mycobacterium tuberculosis from the complete genome sequence.</title>
        <authorList>
            <person name="Cole S.T."/>
            <person name="Brosch R."/>
            <person name="Parkhill J."/>
            <person name="Garnier T."/>
            <person name="Churcher C.M."/>
            <person name="Harris D.E."/>
            <person name="Gordon S.V."/>
            <person name="Eiglmeier K."/>
            <person name="Gas S."/>
            <person name="Barry C.E. III"/>
            <person name="Tekaia F."/>
            <person name="Badcock K."/>
            <person name="Basham D."/>
            <person name="Brown D."/>
            <person name="Chillingworth T."/>
            <person name="Connor R."/>
            <person name="Davies R.M."/>
            <person name="Devlin K."/>
            <person name="Feltwell T."/>
            <person name="Gentles S."/>
            <person name="Hamlin N."/>
            <person name="Holroyd S."/>
            <person name="Hornsby T."/>
            <person name="Jagels K."/>
            <person name="Krogh A."/>
            <person name="McLean J."/>
            <person name="Moule S."/>
            <person name="Murphy L.D."/>
            <person name="Oliver S."/>
            <person name="Osborne J."/>
            <person name="Quail M.A."/>
            <person name="Rajandream M.A."/>
            <person name="Rogers J."/>
            <person name="Rutter S."/>
            <person name="Seeger K."/>
            <person name="Skelton S."/>
            <person name="Squares S."/>
            <person name="Squares R."/>
            <person name="Sulston J.E."/>
            <person name="Taylor K."/>
            <person name="Whitehead S."/>
            <person name="Barrell B.G."/>
        </authorList>
    </citation>
    <scope>NUCLEOTIDE SEQUENCE [LARGE SCALE GENOMIC DNA]</scope>
    <source>
        <strain>ATCC 25618 / H37Rv</strain>
    </source>
</reference>
<reference key="2">
    <citation type="journal article" date="2001" name="Proc. Natl. Acad. Sci. U.S.A.">
        <title>Regulation of the Mycobacterium tuberculosis hypoxic response gene encoding alpha -crystallin.</title>
        <authorList>
            <person name="Sherman D.R."/>
            <person name="Voskuil M."/>
            <person name="Schnappinger D."/>
            <person name="Liao R."/>
            <person name="Harrell M.I."/>
            <person name="Schoolnik G.K."/>
        </authorList>
    </citation>
    <scope>INDUCTION BY HYPOXIA</scope>
    <source>
        <strain>ATCC 25618 / H37Rv</strain>
    </source>
</reference>
<reference key="3">
    <citation type="journal article" date="2003" name="J. Exp. Med.">
        <title>Inhibition of respiration by nitric oxide induces a Mycobacterium tuberculosis dormancy program.</title>
        <authorList>
            <person name="Voskuil M.I."/>
            <person name="Schnappinger D."/>
            <person name="Visconti K.C."/>
            <person name="Harrell M.I."/>
            <person name="Dolganov G.M."/>
            <person name="Sherman D.R."/>
            <person name="Schoolnik G.K."/>
        </authorList>
    </citation>
    <scope>INDUCTION BY NITRIC OXIDE (NO) AND BY HYPOXIA</scope>
    <scope>DORMANCY REGULON</scope>
    <source>
        <strain>ATCC 25618 / H37Rv</strain>
    </source>
</reference>
<reference key="4">
    <citation type="journal article" date="2008" name="Cell Host Microbe">
        <title>Mycobacterium tuberculosis senses host-derived carbon monoxide during macrophage infection.</title>
        <authorList>
            <person name="Shiloh M.U."/>
            <person name="Manzanillo P."/>
            <person name="Cox J.S."/>
        </authorList>
    </citation>
    <scope>INDUCTION BY CARBON MONOXIDE (CO)</scope>
    <source>
        <strain>ATCC 35801 / TMC 107 / Erdman</strain>
    </source>
</reference>
<reference key="5">
    <citation type="journal article" date="2008" name="J. Biol. Chem.">
        <title>Heme oxygenase-1-derived carbon monoxide induces the Mycobacterium tuberculosis dormancy regulon.</title>
        <authorList>
            <person name="Kumar A."/>
            <person name="Deshane J.S."/>
            <person name="Crossman D.K."/>
            <person name="Bolisetty S."/>
            <person name="Yan B.S."/>
            <person name="Kramnik I."/>
            <person name="Agarwal A."/>
            <person name="Steyn A.J."/>
        </authorList>
    </citation>
    <scope>INDUCTION BY CARBON MONOXIDE (CO)</scope>
    <scope>DORMANCY REGULON</scope>
    <source>
        <strain>ATCC 25618 / H37Rv</strain>
    </source>
</reference>
<reference key="6">
    <citation type="journal article" date="2010" name="PLoS ONE">
        <title>Prokaryotic ubiquitin-like protein (Pup) proteome of Mycobacterium tuberculosis.</title>
        <authorList>
            <person name="Festa R.A."/>
            <person name="McAllister F."/>
            <person name="Pearce M.J."/>
            <person name="Mintseris J."/>
            <person name="Burns K.E."/>
            <person name="Gygi S.P."/>
            <person name="Darwin K.H."/>
        </authorList>
    </citation>
    <scope>PUPYLATION AT LYS-82</scope>
    <scope>IDENTIFICATION BY MASS SPECTROMETRY</scope>
    <source>
        <strain>ATCC 25618 / H37Rv</strain>
    </source>
</reference>
<reference key="7">
    <citation type="journal article" date="2011" name="Mol. Cell. Proteomics">
        <title>Proteogenomic analysis of Mycobacterium tuberculosis by high resolution mass spectrometry.</title>
        <authorList>
            <person name="Kelkar D.S."/>
            <person name="Kumar D."/>
            <person name="Kumar P."/>
            <person name="Balakrishnan L."/>
            <person name="Muthusamy B."/>
            <person name="Yadav A.K."/>
            <person name="Shrivastava P."/>
            <person name="Marimuthu A."/>
            <person name="Anand S."/>
            <person name="Sundaram H."/>
            <person name="Kingsbury R."/>
            <person name="Harsha H.C."/>
            <person name="Nair B."/>
            <person name="Prasad T.S."/>
            <person name="Chauhan D.S."/>
            <person name="Katoch K."/>
            <person name="Katoch V.M."/>
            <person name="Kumar P."/>
            <person name="Chaerkady R."/>
            <person name="Ramachandran S."/>
            <person name="Dash D."/>
            <person name="Pandey A."/>
        </authorList>
    </citation>
    <scope>IDENTIFICATION BY MASS SPECTROMETRY [LARGE SCALE ANALYSIS]</scope>
    <source>
        <strain>ATCC 25618 / H37Rv</strain>
    </source>
</reference>
<keyword id="KW-0067">ATP-binding</keyword>
<keyword id="KW-1017">Isopeptide bond</keyword>
<keyword id="KW-0547">Nucleotide-binding</keyword>
<keyword id="KW-1185">Reference proteome</keyword>
<keyword id="KW-0832">Ubl conjugation</keyword>
<evidence type="ECO:0000250" key="1">
    <source>
        <dbReference type="UniProtKB" id="P9WFD7"/>
    </source>
</evidence>
<evidence type="ECO:0000269" key="2">
    <source>
    </source>
</evidence>
<evidence type="ECO:0000269" key="3">
    <source>
    </source>
</evidence>
<evidence type="ECO:0000269" key="4">
    <source>
    </source>
</evidence>
<evidence type="ECO:0000269" key="5">
    <source>
    </source>
</evidence>
<evidence type="ECO:0000269" key="6">
    <source>
    </source>
</evidence>
<evidence type="ECO:0000305" key="7"/>